<comment type="function">
    <text evidence="1">Involved in base excision repair of DNA damaged by oxidation or by mutagenic agents. Has DNA glycosylase activity towards 5-hydroxyuracil and other oxidized derivatives of cytosine with a preference for mismatched double-stranded DNA (DNA bubbles). Has low or no DNA glycosylase activity towards thymine glycol, 2-hydroxyadenine, hypoxanthine and 8-oxoguanine. Has AP (apurinic/apyrimidinic) lyase activity and introduces nicks in the DNA strand. Cleaves the DNA backbone by beta-delta elimination to generate a single-strand break at the site of the removed base with both 3'- and 5'-phosphates (By similarity).</text>
</comment>
<comment type="catalytic activity">
    <reaction evidence="4">
        <text>2'-deoxyribonucleotide-(2'-deoxyribose 5'-phosphate)-2'-deoxyribonucleotide-DNA = a 3'-end 2'-deoxyribonucleotide-(2,3-dehydro-2,3-deoxyribose 5'-phosphate)-DNA + a 5'-end 5'-phospho-2'-deoxyribonucleoside-DNA + H(+)</text>
        <dbReference type="Rhea" id="RHEA:66592"/>
        <dbReference type="Rhea" id="RHEA-COMP:13180"/>
        <dbReference type="Rhea" id="RHEA-COMP:16897"/>
        <dbReference type="Rhea" id="RHEA-COMP:17067"/>
        <dbReference type="ChEBI" id="CHEBI:15378"/>
        <dbReference type="ChEBI" id="CHEBI:136412"/>
        <dbReference type="ChEBI" id="CHEBI:157695"/>
        <dbReference type="ChEBI" id="CHEBI:167181"/>
        <dbReference type="EC" id="4.2.99.18"/>
    </reaction>
</comment>
<comment type="activity regulation">
    <text evidence="1">Acetylation of Lys-50 leads to loss of DNA nicking activity.</text>
</comment>
<comment type="subunit">
    <text evidence="1">Binds EP300.</text>
</comment>
<comment type="subcellular location">
    <subcellularLocation>
        <location evidence="1">Nucleus</location>
    </subcellularLocation>
</comment>
<comment type="domain">
    <text>The zinc-finger domain is important for DNA binding.</text>
</comment>
<comment type="similarity">
    <text evidence="4">Belongs to the FPG family.</text>
</comment>
<reference key="1">
    <citation type="submission" date="2004-01" db="EMBL/GenBank/DDBJ databases">
        <title>Gene identification signature analysis: a novel method for genome annotation.</title>
        <authorList>
            <person name="Ang C.C."/>
            <person name="Ng P.W.P."/>
            <person name="Wei C.L."/>
            <person name="Ruan Y."/>
        </authorList>
    </citation>
    <scope>NUCLEOTIDE SEQUENCE [MRNA]</scope>
    <source>
        <strain>129/Ola</strain>
    </source>
</reference>
<reference key="2">
    <citation type="journal article" date="2009" name="PLoS Biol.">
        <title>Lineage-specific biology revealed by a finished genome assembly of the mouse.</title>
        <authorList>
            <person name="Church D.M."/>
            <person name="Goodstadt L."/>
            <person name="Hillier L.W."/>
            <person name="Zody M.C."/>
            <person name="Goldstein S."/>
            <person name="She X."/>
            <person name="Bult C.J."/>
            <person name="Agarwala R."/>
            <person name="Cherry J.L."/>
            <person name="DiCuccio M."/>
            <person name="Hlavina W."/>
            <person name="Kapustin Y."/>
            <person name="Meric P."/>
            <person name="Maglott D."/>
            <person name="Birtle Z."/>
            <person name="Marques A.C."/>
            <person name="Graves T."/>
            <person name="Zhou S."/>
            <person name="Teague B."/>
            <person name="Potamousis K."/>
            <person name="Churas C."/>
            <person name="Place M."/>
            <person name="Herschleb J."/>
            <person name="Runnheim R."/>
            <person name="Forrest D."/>
            <person name="Amos-Landgraf J."/>
            <person name="Schwartz D.C."/>
            <person name="Cheng Z."/>
            <person name="Lindblad-Toh K."/>
            <person name="Eichler E.E."/>
            <person name="Ponting C.P."/>
        </authorList>
    </citation>
    <scope>NUCLEOTIDE SEQUENCE [LARGE SCALE GENOMIC DNA]</scope>
    <source>
        <strain>C57BL/6J</strain>
    </source>
</reference>
<reference key="3">
    <citation type="submission" date="2005-07" db="EMBL/GenBank/DDBJ databases">
        <authorList>
            <person name="Mural R.J."/>
            <person name="Adams M.D."/>
            <person name="Myers E.W."/>
            <person name="Smith H.O."/>
            <person name="Venter J.C."/>
        </authorList>
    </citation>
    <scope>NUCLEOTIDE SEQUENCE [LARGE SCALE GENOMIC DNA]</scope>
</reference>
<keyword id="KW-0007">Acetylation</keyword>
<keyword id="KW-0227">DNA damage</keyword>
<keyword id="KW-0234">DNA repair</keyword>
<keyword id="KW-0238">DNA-binding</keyword>
<keyword id="KW-0326">Glycosidase</keyword>
<keyword id="KW-0378">Hydrolase</keyword>
<keyword id="KW-0456">Lyase</keyword>
<keyword id="KW-0479">Metal-binding</keyword>
<keyword id="KW-0511">Multifunctional enzyme</keyword>
<keyword id="KW-0539">Nucleus</keyword>
<keyword id="KW-0597">Phosphoprotein</keyword>
<keyword id="KW-1185">Reference proteome</keyword>
<keyword id="KW-0862">Zinc</keyword>
<keyword id="KW-0863">Zinc-finger</keyword>
<protein>
    <recommendedName>
        <fullName>Endonuclease 8-like 2</fullName>
        <ecNumber>3.2.2.-</ecNumber>
        <ecNumber>4.2.99.18</ecNumber>
    </recommendedName>
    <alternativeName>
        <fullName>DNA glycosylase/AP lyase Neil2</fullName>
    </alternativeName>
    <alternativeName>
        <fullName>DNA-(apurinic or apyrimidinic site) lyase Neil2</fullName>
    </alternativeName>
    <alternativeName>
        <fullName>Endonuclease VIII-like 2</fullName>
    </alternativeName>
    <alternativeName>
        <fullName>Nei homolog 2</fullName>
        <shortName>NEH2</shortName>
    </alternativeName>
    <alternativeName>
        <fullName>Nei-like protein 2</fullName>
    </alternativeName>
</protein>
<gene>
    <name type="primary">Neil2</name>
    <name type="synonym">Gm1212</name>
</gene>
<evidence type="ECO:0000250" key="1"/>
<evidence type="ECO:0000250" key="2">
    <source>
        <dbReference type="UniProtKB" id="Q969S2"/>
    </source>
</evidence>
<evidence type="ECO:0000255" key="3">
    <source>
        <dbReference type="PROSITE-ProRule" id="PRU00391"/>
    </source>
</evidence>
<evidence type="ECO:0000255" key="4">
    <source>
        <dbReference type="PROSITE-ProRule" id="PRU00392"/>
    </source>
</evidence>
<evidence type="ECO:0000256" key="5">
    <source>
        <dbReference type="SAM" id="MobiDB-lite"/>
    </source>
</evidence>
<evidence type="ECO:0000305" key="6"/>
<organism>
    <name type="scientific">Mus musculus</name>
    <name type="common">Mouse</name>
    <dbReference type="NCBI Taxonomy" id="10090"/>
    <lineage>
        <taxon>Eukaryota</taxon>
        <taxon>Metazoa</taxon>
        <taxon>Chordata</taxon>
        <taxon>Craniata</taxon>
        <taxon>Vertebrata</taxon>
        <taxon>Euteleostomi</taxon>
        <taxon>Mammalia</taxon>
        <taxon>Eutheria</taxon>
        <taxon>Euarchontoglires</taxon>
        <taxon>Glires</taxon>
        <taxon>Rodentia</taxon>
        <taxon>Myomorpha</taxon>
        <taxon>Muroidea</taxon>
        <taxon>Muridae</taxon>
        <taxon>Murinae</taxon>
        <taxon>Mus</taxon>
        <taxon>Mus</taxon>
    </lineage>
</organism>
<name>NEIL2_MOUSE</name>
<feature type="initiator methionine" description="Removed" evidence="1">
    <location>
        <position position="1"/>
    </location>
</feature>
<feature type="chain" id="PRO_0000170909" description="Endonuclease 8-like 2">
    <location>
        <begin position="2"/>
        <end position="329"/>
    </location>
</feature>
<feature type="zinc finger region" description="FPG-type" evidence="3">
    <location>
        <begin position="280"/>
        <end position="316"/>
    </location>
</feature>
<feature type="region of interest" description="Disordered" evidence="5">
    <location>
        <begin position="88"/>
        <end position="112"/>
    </location>
</feature>
<feature type="active site" description="Schiff-base intermediate with DNA" evidence="4">
    <location>
        <position position="2"/>
    </location>
</feature>
<feature type="active site" description="Proton donor" evidence="4">
    <location>
        <position position="3"/>
    </location>
</feature>
<feature type="active site" description="Proton donor; for beta-elimination activity" evidence="4">
    <location>
        <position position="50"/>
    </location>
</feature>
<feature type="active site" description="Proton donor; for delta-elimination activity" evidence="4">
    <location>
        <position position="306"/>
    </location>
</feature>
<feature type="binding site" evidence="1">
    <location>
        <position position="227"/>
    </location>
    <ligand>
        <name>DNA</name>
        <dbReference type="ChEBI" id="CHEBI:16991"/>
    </ligand>
</feature>
<feature type="modified residue" description="N6-acetyllysine" evidence="2">
    <location>
        <position position="50"/>
    </location>
</feature>
<feature type="modified residue" description="Phosphoserine" evidence="2">
    <location>
        <position position="68"/>
    </location>
</feature>
<feature type="modified residue" description="N6-acetyllysine" evidence="2">
    <location>
        <position position="150"/>
    </location>
</feature>
<feature type="sequence conflict" description="In Ref. 1; AAR98807." evidence="6" ref="1">
    <original>R</original>
    <variation>K</variation>
    <location>
        <position position="220"/>
    </location>
</feature>
<feature type="sequence conflict" description="In Ref. 1; AAR98807." evidence="6" ref="1">
    <original>L</original>
    <variation>F</variation>
    <location>
        <position position="256"/>
    </location>
</feature>
<feature type="sequence conflict" description="In Ref. 1; AAR98807." evidence="6" ref="1">
    <original>L</original>
    <variation>P</variation>
    <location>
        <position position="318"/>
    </location>
</feature>
<sequence length="329" mass="36834">MPEGPSVRKFHHLVSPFVGQKVVKTGGSSKKLHPAAFQSLWLQDAQVHGKKLFLRFDPDEEMEPLNSSPQPIQGMWQKEAVDRELALGPSAQEPSAGPSGSGEPVPSRSAETYNLGKIPSADAQRWLEVRFGLFGSIWVNDFSRAKKANKKGDWRDPVPRLVLHFSGGGFLVFYNCQMSWSPPPVIEPTCDILSEKFHRGQALEALSQAQPVCYTLLDQRYFSGLGNIIKNEALYRARIHPLSLGSCLSSSSREALVDHVVEFSKDWLRDKFQGKERHTQIYQKEQCPSGHQVMKETFGPPDGLQRLTWWCPQCQPQLSSKGPQNLPSS</sequence>
<accession>Q6R2P8</accession>
<accession>G3X969</accession>
<dbReference type="EC" id="3.2.2.-"/>
<dbReference type="EC" id="4.2.99.18"/>
<dbReference type="EMBL" id="AY518221">
    <property type="protein sequence ID" value="AAR98807.1"/>
    <property type="molecule type" value="mRNA"/>
</dbReference>
<dbReference type="EMBL" id="AC090654">
    <property type="status" value="NOT_ANNOTATED_CDS"/>
    <property type="molecule type" value="Genomic_DNA"/>
</dbReference>
<dbReference type="EMBL" id="CH466535">
    <property type="protein sequence ID" value="EDL36068.1"/>
    <property type="molecule type" value="Genomic_DNA"/>
</dbReference>
<dbReference type="CCDS" id="CCDS36949.1"/>
<dbReference type="RefSeq" id="NP_963904.2">
    <property type="nucleotide sequence ID" value="NM_201610.2"/>
</dbReference>
<dbReference type="RefSeq" id="XP_006519262.1">
    <property type="nucleotide sequence ID" value="XM_006519199.5"/>
</dbReference>
<dbReference type="SMR" id="Q6R2P8"/>
<dbReference type="BioGRID" id="238543">
    <property type="interactions" value="1"/>
</dbReference>
<dbReference type="FunCoup" id="Q6R2P8">
    <property type="interactions" value="983"/>
</dbReference>
<dbReference type="STRING" id="10090.ENSMUSP00000045200"/>
<dbReference type="PhosphoSitePlus" id="Q6R2P8"/>
<dbReference type="PaxDb" id="10090-ENSMUSP00000045200"/>
<dbReference type="ProteomicsDB" id="252803"/>
<dbReference type="Antibodypedia" id="22115">
    <property type="antibodies" value="139 antibodies from 24 providers"/>
</dbReference>
<dbReference type="DNASU" id="382913"/>
<dbReference type="Ensembl" id="ENSMUST00000038229.5">
    <property type="protein sequence ID" value="ENSMUSP00000045200.5"/>
    <property type="gene ID" value="ENSMUSG00000035121.7"/>
</dbReference>
<dbReference type="GeneID" id="382913"/>
<dbReference type="KEGG" id="mmu:382913"/>
<dbReference type="UCSC" id="uc007uhk.1">
    <property type="organism name" value="mouse"/>
</dbReference>
<dbReference type="AGR" id="MGI:2686058"/>
<dbReference type="CTD" id="252969"/>
<dbReference type="MGI" id="MGI:2686058">
    <property type="gene designation" value="Neil2"/>
</dbReference>
<dbReference type="VEuPathDB" id="HostDB:ENSMUSG00000035121"/>
<dbReference type="eggNOG" id="ENOG502RIIB">
    <property type="taxonomic scope" value="Eukaryota"/>
</dbReference>
<dbReference type="GeneTree" id="ENSGT00940000153230"/>
<dbReference type="HOGENOM" id="CLU_072818_0_0_1"/>
<dbReference type="InParanoid" id="Q6R2P8"/>
<dbReference type="OMA" id="LTWWCPH"/>
<dbReference type="OrthoDB" id="444592at2759"/>
<dbReference type="PhylomeDB" id="Q6R2P8"/>
<dbReference type="TreeFam" id="TF331502"/>
<dbReference type="Reactome" id="R-MMU-110329">
    <property type="pathway name" value="Cleavage of the damaged pyrimidine"/>
</dbReference>
<dbReference type="Reactome" id="R-MMU-5649702">
    <property type="pathway name" value="APEX1-Independent Resolution of AP Sites via the Single Nucleotide Replacement Pathway"/>
</dbReference>
<dbReference type="BioGRID-ORCS" id="382913">
    <property type="hits" value="1 hit in 112 CRISPR screens"/>
</dbReference>
<dbReference type="PRO" id="PR:Q6R2P8"/>
<dbReference type="Proteomes" id="UP000000589">
    <property type="component" value="Chromosome 14"/>
</dbReference>
<dbReference type="RNAct" id="Q6R2P8">
    <property type="molecule type" value="protein"/>
</dbReference>
<dbReference type="Bgee" id="ENSMUSG00000035121">
    <property type="expression patterns" value="Expressed in primary oocyte and 58 other cell types or tissues"/>
</dbReference>
<dbReference type="ExpressionAtlas" id="Q6R2P8">
    <property type="expression patterns" value="baseline and differential"/>
</dbReference>
<dbReference type="GO" id="GO:0005737">
    <property type="term" value="C:cytoplasm"/>
    <property type="evidence" value="ECO:0000314"/>
    <property type="project" value="MGI"/>
</dbReference>
<dbReference type="GO" id="GO:0015630">
    <property type="term" value="C:microtubule cytoskeleton"/>
    <property type="evidence" value="ECO:0000314"/>
    <property type="project" value="MGI"/>
</dbReference>
<dbReference type="GO" id="GO:0072686">
    <property type="term" value="C:mitotic spindle"/>
    <property type="evidence" value="ECO:0000314"/>
    <property type="project" value="MGI"/>
</dbReference>
<dbReference type="GO" id="GO:0005654">
    <property type="term" value="C:nucleoplasm"/>
    <property type="evidence" value="ECO:0007669"/>
    <property type="project" value="Ensembl"/>
</dbReference>
<dbReference type="GO" id="GO:0140078">
    <property type="term" value="F:class I DNA-(apurinic or apyrimidinic site) endonuclease activity"/>
    <property type="evidence" value="ECO:0007669"/>
    <property type="project" value="UniProtKB-EC"/>
</dbReference>
<dbReference type="GO" id="GO:0003684">
    <property type="term" value="F:damaged DNA binding"/>
    <property type="evidence" value="ECO:0007669"/>
    <property type="project" value="InterPro"/>
</dbReference>
<dbReference type="GO" id="GO:0019104">
    <property type="term" value="F:DNA N-glycosylase activity"/>
    <property type="evidence" value="ECO:0007669"/>
    <property type="project" value="InterPro"/>
</dbReference>
<dbReference type="GO" id="GO:0008017">
    <property type="term" value="F:microtubule binding"/>
    <property type="evidence" value="ECO:0000314"/>
    <property type="project" value="MGI"/>
</dbReference>
<dbReference type="GO" id="GO:0008270">
    <property type="term" value="F:zinc ion binding"/>
    <property type="evidence" value="ECO:0007669"/>
    <property type="project" value="UniProtKB-KW"/>
</dbReference>
<dbReference type="GO" id="GO:0006284">
    <property type="term" value="P:base-excision repair"/>
    <property type="evidence" value="ECO:0007669"/>
    <property type="project" value="InterPro"/>
</dbReference>
<dbReference type="CDD" id="cd08968">
    <property type="entry name" value="MeNeil2_N"/>
    <property type="match status" value="1"/>
</dbReference>
<dbReference type="FunFam" id="1.10.8.50:FF:000010">
    <property type="entry name" value="endonuclease 8-like 2"/>
    <property type="match status" value="1"/>
</dbReference>
<dbReference type="Gene3D" id="1.10.8.50">
    <property type="match status" value="1"/>
</dbReference>
<dbReference type="InterPro" id="IPR015886">
    <property type="entry name" value="DNA_glyclase/AP_lyase_DNA-bd"/>
</dbReference>
<dbReference type="InterPro" id="IPR012319">
    <property type="entry name" value="FPG_cat"/>
</dbReference>
<dbReference type="InterPro" id="IPR010979">
    <property type="entry name" value="Ribosomal_uS13-like_H2TH"/>
</dbReference>
<dbReference type="InterPro" id="IPR000214">
    <property type="entry name" value="Znf_DNA_glyclase/AP_lyase"/>
</dbReference>
<dbReference type="PANTHER" id="PTHR22993:SF29">
    <property type="entry name" value="ENDONUCLEASE 8-LIKE 2"/>
    <property type="match status" value="1"/>
</dbReference>
<dbReference type="PANTHER" id="PTHR22993">
    <property type="entry name" value="FORMAMIDOPYRIMIDINE-DNA GLYCOSYLASE"/>
    <property type="match status" value="1"/>
</dbReference>
<dbReference type="Pfam" id="PF06831">
    <property type="entry name" value="H2TH"/>
    <property type="match status" value="1"/>
</dbReference>
<dbReference type="SMART" id="SM01232">
    <property type="entry name" value="H2TH"/>
    <property type="match status" value="1"/>
</dbReference>
<dbReference type="SUPFAM" id="SSF46946">
    <property type="entry name" value="S13-like H2TH domain"/>
    <property type="match status" value="1"/>
</dbReference>
<dbReference type="PROSITE" id="PS51068">
    <property type="entry name" value="FPG_CAT"/>
    <property type="match status" value="1"/>
</dbReference>
<dbReference type="PROSITE" id="PS51066">
    <property type="entry name" value="ZF_FPG_2"/>
    <property type="match status" value="1"/>
</dbReference>
<proteinExistence type="evidence at transcript level"/>